<reference key="1">
    <citation type="journal article" date="2006" name="Nature">
        <title>Insights from the genome of the biotrophic fungal plant pathogen Ustilago maydis.</title>
        <authorList>
            <person name="Kaemper J."/>
            <person name="Kahmann R."/>
            <person name="Boelker M."/>
            <person name="Ma L.-J."/>
            <person name="Brefort T."/>
            <person name="Saville B.J."/>
            <person name="Banuett F."/>
            <person name="Kronstad J.W."/>
            <person name="Gold S.E."/>
            <person name="Mueller O."/>
            <person name="Perlin M.H."/>
            <person name="Woesten H.A.B."/>
            <person name="de Vries R."/>
            <person name="Ruiz-Herrera J."/>
            <person name="Reynaga-Pena C.G."/>
            <person name="Snetselaar K."/>
            <person name="McCann M."/>
            <person name="Perez-Martin J."/>
            <person name="Feldbruegge M."/>
            <person name="Basse C.W."/>
            <person name="Steinberg G."/>
            <person name="Ibeas J.I."/>
            <person name="Holloman W."/>
            <person name="Guzman P."/>
            <person name="Farman M.L."/>
            <person name="Stajich J.E."/>
            <person name="Sentandreu R."/>
            <person name="Gonzalez-Prieto J.M."/>
            <person name="Kennell J.C."/>
            <person name="Molina L."/>
            <person name="Schirawski J."/>
            <person name="Mendoza-Mendoza A."/>
            <person name="Greilinger D."/>
            <person name="Muench K."/>
            <person name="Roessel N."/>
            <person name="Scherer M."/>
            <person name="Vranes M."/>
            <person name="Ladendorf O."/>
            <person name="Vincon V."/>
            <person name="Fuchs U."/>
            <person name="Sandrock B."/>
            <person name="Meng S."/>
            <person name="Ho E.C.H."/>
            <person name="Cahill M.J."/>
            <person name="Boyce K.J."/>
            <person name="Klose J."/>
            <person name="Klosterman S.J."/>
            <person name="Deelstra H.J."/>
            <person name="Ortiz-Castellanos L."/>
            <person name="Li W."/>
            <person name="Sanchez-Alonso P."/>
            <person name="Schreier P.H."/>
            <person name="Haeuser-Hahn I."/>
            <person name="Vaupel M."/>
            <person name="Koopmann E."/>
            <person name="Friedrich G."/>
            <person name="Voss H."/>
            <person name="Schlueter T."/>
            <person name="Margolis J."/>
            <person name="Platt D."/>
            <person name="Swimmer C."/>
            <person name="Gnirke A."/>
            <person name="Chen F."/>
            <person name="Vysotskaia V."/>
            <person name="Mannhaupt G."/>
            <person name="Gueldener U."/>
            <person name="Muensterkoetter M."/>
            <person name="Haase D."/>
            <person name="Oesterheld M."/>
            <person name="Mewes H.-W."/>
            <person name="Mauceli E.W."/>
            <person name="DeCaprio D."/>
            <person name="Wade C.M."/>
            <person name="Butler J."/>
            <person name="Young S.K."/>
            <person name="Jaffe D.B."/>
            <person name="Calvo S.E."/>
            <person name="Nusbaum C."/>
            <person name="Galagan J.E."/>
            <person name="Birren B.W."/>
        </authorList>
    </citation>
    <scope>NUCLEOTIDE SEQUENCE [LARGE SCALE GENOMIC DNA]</scope>
    <source>
        <strain>DSM 14603 / FGSC 9021 / UM521</strain>
    </source>
</reference>
<reference key="2">
    <citation type="submission" date="2014-09" db="EMBL/GenBank/DDBJ databases">
        <authorList>
            <person name="Gueldener U."/>
            <person name="Muensterkoetter M."/>
            <person name="Walter M.C."/>
            <person name="Mannhaupt G."/>
            <person name="Kahmann R."/>
        </authorList>
    </citation>
    <scope>GENOME REANNOTATION</scope>
    <source>
        <strain>DSM 14603 / FGSC 9021 / UM521</strain>
    </source>
</reference>
<feature type="chain" id="PRO_0000252327" description="Translationally-controlled tumor protein homolog">
    <location>
        <begin position="1"/>
        <end position="167"/>
    </location>
</feature>
<feature type="domain" description="TCTP" evidence="2">
    <location>
        <begin position="1"/>
        <end position="167"/>
    </location>
</feature>
<sequence length="167" mass="18586">MKLFTDIISNDEMCSDGYEMKLVEDVVYEVDAAKIVVSDGDVDIGANPSAEEAAEALENGAEQVINIVHSFRLQSTQFDKKSYLAYLKGYMKSVKAKLAESNPDRVPAFEKGAAAFAKKIVGSFNDWEFFTGESMDPEGMVALLNYREDGVTPYLVFWKDGLRETKI</sequence>
<accession>Q4PF30</accession>
<accession>A0A0D1CYI1</accession>
<organism>
    <name type="scientific">Mycosarcoma maydis</name>
    <name type="common">Corn smut fungus</name>
    <name type="synonym">Ustilago maydis</name>
    <dbReference type="NCBI Taxonomy" id="5270"/>
    <lineage>
        <taxon>Eukaryota</taxon>
        <taxon>Fungi</taxon>
        <taxon>Dikarya</taxon>
        <taxon>Basidiomycota</taxon>
        <taxon>Ustilaginomycotina</taxon>
        <taxon>Ustilaginomycetes</taxon>
        <taxon>Ustilaginales</taxon>
        <taxon>Ustilaginaceae</taxon>
        <taxon>Mycosarcoma</taxon>
    </lineage>
</organism>
<gene>
    <name type="ORF">UMAG_12131</name>
</gene>
<dbReference type="EMBL" id="CM003141">
    <property type="protein sequence ID" value="KIS71383.1"/>
    <property type="molecule type" value="Genomic_DNA"/>
</dbReference>
<dbReference type="RefSeq" id="XP_011387498.1">
    <property type="nucleotide sequence ID" value="XM_011389196.1"/>
</dbReference>
<dbReference type="SMR" id="Q4PF30"/>
<dbReference type="FunCoup" id="Q4PF30">
    <property type="interactions" value="491"/>
</dbReference>
<dbReference type="STRING" id="237631.Q4PF30"/>
<dbReference type="EnsemblFungi" id="KIS71383">
    <property type="protein sequence ID" value="KIS71383"/>
    <property type="gene ID" value="UMAG_12131"/>
</dbReference>
<dbReference type="GeneID" id="23567892"/>
<dbReference type="KEGG" id="uma:UMAG_12131"/>
<dbReference type="VEuPathDB" id="FungiDB:UMAG_12131"/>
<dbReference type="eggNOG" id="KOG1727">
    <property type="taxonomic scope" value="Eukaryota"/>
</dbReference>
<dbReference type="HOGENOM" id="CLU_095877_0_0_1"/>
<dbReference type="InParanoid" id="Q4PF30"/>
<dbReference type="OrthoDB" id="10248936at2759"/>
<dbReference type="Proteomes" id="UP000000561">
    <property type="component" value="Chromosome 2"/>
</dbReference>
<dbReference type="GO" id="GO:0005737">
    <property type="term" value="C:cytoplasm"/>
    <property type="evidence" value="ECO:0000318"/>
    <property type="project" value="GO_Central"/>
</dbReference>
<dbReference type="GO" id="GO:0005874">
    <property type="term" value="C:microtubule"/>
    <property type="evidence" value="ECO:0007669"/>
    <property type="project" value="UniProtKB-KW"/>
</dbReference>
<dbReference type="GO" id="GO:0005509">
    <property type="term" value="F:calcium ion binding"/>
    <property type="evidence" value="ECO:0000318"/>
    <property type="project" value="GO_Central"/>
</dbReference>
<dbReference type="GO" id="GO:0006412">
    <property type="term" value="P:translation"/>
    <property type="evidence" value="ECO:0007669"/>
    <property type="project" value="UniProtKB-KW"/>
</dbReference>
<dbReference type="FunFam" id="2.170.150.10:FF:000002">
    <property type="entry name" value="Translationally-controlled tumor protein homolog"/>
    <property type="match status" value="1"/>
</dbReference>
<dbReference type="Gene3D" id="2.170.150.10">
    <property type="entry name" value="Metal Binding Protein, Guanine Nucleotide Exchange Factor, Chain A"/>
    <property type="match status" value="1"/>
</dbReference>
<dbReference type="InterPro" id="IPR011057">
    <property type="entry name" value="Mss4-like_sf"/>
</dbReference>
<dbReference type="InterPro" id="IPR011323">
    <property type="entry name" value="Mss4/transl-control_tumour"/>
</dbReference>
<dbReference type="InterPro" id="IPR034737">
    <property type="entry name" value="TCTP"/>
</dbReference>
<dbReference type="InterPro" id="IPR018103">
    <property type="entry name" value="Translation_control_tumour_CS"/>
</dbReference>
<dbReference type="InterPro" id="IPR018105">
    <property type="entry name" value="Translational_control_tumour_p"/>
</dbReference>
<dbReference type="PANTHER" id="PTHR11991">
    <property type="entry name" value="TRANSLATIONALLY CONTROLLED TUMOR PROTEIN-RELATED"/>
    <property type="match status" value="1"/>
</dbReference>
<dbReference type="PANTHER" id="PTHR11991:SF0">
    <property type="entry name" value="TRANSLATIONALLY-CONTROLLED TUMOR PROTEIN"/>
    <property type="match status" value="1"/>
</dbReference>
<dbReference type="Pfam" id="PF00838">
    <property type="entry name" value="TCTP"/>
    <property type="match status" value="1"/>
</dbReference>
<dbReference type="PRINTS" id="PR01653">
    <property type="entry name" value="TCTPROTEIN"/>
</dbReference>
<dbReference type="SUPFAM" id="SSF51316">
    <property type="entry name" value="Mss4-like"/>
    <property type="match status" value="1"/>
</dbReference>
<dbReference type="PROSITE" id="PS01002">
    <property type="entry name" value="TCTP_1"/>
    <property type="match status" value="1"/>
</dbReference>
<dbReference type="PROSITE" id="PS01003">
    <property type="entry name" value="TCTP_2"/>
    <property type="match status" value="1"/>
</dbReference>
<dbReference type="PROSITE" id="PS51797">
    <property type="entry name" value="TCTP_3"/>
    <property type="match status" value="1"/>
</dbReference>
<proteinExistence type="inferred from homology"/>
<protein>
    <recommendedName>
        <fullName>Translationally-controlled tumor protein homolog</fullName>
        <shortName>TCTP</shortName>
    </recommendedName>
</protein>
<keyword id="KW-0963">Cytoplasm</keyword>
<keyword id="KW-0206">Cytoskeleton</keyword>
<keyword id="KW-0493">Microtubule</keyword>
<keyword id="KW-0648">Protein biosynthesis</keyword>
<keyword id="KW-1185">Reference proteome</keyword>
<comment type="function">
    <text evidence="1">Involved in protein synthesis. Involved in microtubule stabilization (By similarity).</text>
</comment>
<comment type="subcellular location">
    <subcellularLocation>
        <location evidence="1">Cytoplasm</location>
        <location evidence="1">Cytoskeleton</location>
    </subcellularLocation>
</comment>
<comment type="similarity">
    <text evidence="2">Belongs to the TCTP family.</text>
</comment>
<evidence type="ECO:0000250" key="1"/>
<evidence type="ECO:0000255" key="2">
    <source>
        <dbReference type="PROSITE-ProRule" id="PRU01133"/>
    </source>
</evidence>
<name>TCTP_MYCMD</name>